<reference key="1">
    <citation type="submission" date="2008-05" db="EMBL/GenBank/DDBJ databases">
        <title>Complete sequence of Shigella boydii serotype 18 strain BS512.</title>
        <authorList>
            <person name="Rasko D.A."/>
            <person name="Rosovitz M."/>
            <person name="Maurelli A.T."/>
            <person name="Myers G."/>
            <person name="Seshadri R."/>
            <person name="Cer R."/>
            <person name="Jiang L."/>
            <person name="Ravel J."/>
            <person name="Sebastian Y."/>
        </authorList>
    </citation>
    <scope>NUCLEOTIDE SEQUENCE [LARGE SCALE GENOMIC DNA]</scope>
    <source>
        <strain>CDC 3083-94 / BS512</strain>
    </source>
</reference>
<comment type="function">
    <text evidence="1">Catalyzes the ATP-dependent phosphorylation of L-homoserine to L-homoserine phosphate.</text>
</comment>
<comment type="catalytic activity">
    <reaction evidence="1">
        <text>L-homoserine + ATP = O-phospho-L-homoserine + ADP + H(+)</text>
        <dbReference type="Rhea" id="RHEA:13985"/>
        <dbReference type="ChEBI" id="CHEBI:15378"/>
        <dbReference type="ChEBI" id="CHEBI:30616"/>
        <dbReference type="ChEBI" id="CHEBI:57476"/>
        <dbReference type="ChEBI" id="CHEBI:57590"/>
        <dbReference type="ChEBI" id="CHEBI:456216"/>
        <dbReference type="EC" id="2.7.1.39"/>
    </reaction>
</comment>
<comment type="pathway">
    <text evidence="1">Amino-acid biosynthesis; L-threonine biosynthesis; L-threonine from L-aspartate: step 4/5.</text>
</comment>
<comment type="subcellular location">
    <subcellularLocation>
        <location evidence="1">Cytoplasm</location>
    </subcellularLocation>
</comment>
<comment type="similarity">
    <text evidence="1">Belongs to the GHMP kinase family. Homoserine kinase subfamily.</text>
</comment>
<accession>B2U219</accession>
<keyword id="KW-0028">Amino-acid biosynthesis</keyword>
<keyword id="KW-0067">ATP-binding</keyword>
<keyword id="KW-0963">Cytoplasm</keyword>
<keyword id="KW-0418">Kinase</keyword>
<keyword id="KW-0547">Nucleotide-binding</keyword>
<keyword id="KW-1185">Reference proteome</keyword>
<keyword id="KW-0791">Threonine biosynthesis</keyword>
<keyword id="KW-0808">Transferase</keyword>
<dbReference type="EC" id="2.7.1.39" evidence="1"/>
<dbReference type="EMBL" id="CP001063">
    <property type="protein sequence ID" value="ACD09287.1"/>
    <property type="molecule type" value="Genomic_DNA"/>
</dbReference>
<dbReference type="RefSeq" id="WP_000241660.1">
    <property type="nucleotide sequence ID" value="NC_010658.1"/>
</dbReference>
<dbReference type="SMR" id="B2U219"/>
<dbReference type="STRING" id="344609.SbBS512_E0003"/>
<dbReference type="GeneID" id="75202912"/>
<dbReference type="KEGG" id="sbc:SbBS512_E0003"/>
<dbReference type="HOGENOM" id="CLU_041243_1_1_6"/>
<dbReference type="UniPathway" id="UPA00050">
    <property type="reaction ID" value="UER00064"/>
</dbReference>
<dbReference type="Proteomes" id="UP000001030">
    <property type="component" value="Chromosome"/>
</dbReference>
<dbReference type="GO" id="GO:0005737">
    <property type="term" value="C:cytoplasm"/>
    <property type="evidence" value="ECO:0007669"/>
    <property type="project" value="UniProtKB-SubCell"/>
</dbReference>
<dbReference type="GO" id="GO:0005524">
    <property type="term" value="F:ATP binding"/>
    <property type="evidence" value="ECO:0007669"/>
    <property type="project" value="UniProtKB-UniRule"/>
</dbReference>
<dbReference type="GO" id="GO:0004413">
    <property type="term" value="F:homoserine kinase activity"/>
    <property type="evidence" value="ECO:0007669"/>
    <property type="project" value="UniProtKB-UniRule"/>
</dbReference>
<dbReference type="GO" id="GO:0009088">
    <property type="term" value="P:threonine biosynthetic process"/>
    <property type="evidence" value="ECO:0007669"/>
    <property type="project" value="UniProtKB-UniRule"/>
</dbReference>
<dbReference type="FunFam" id="3.30.230.10:FF:000020">
    <property type="entry name" value="Homoserine kinase"/>
    <property type="match status" value="1"/>
</dbReference>
<dbReference type="FunFam" id="3.30.70.890:FF:000002">
    <property type="entry name" value="Homoserine kinase"/>
    <property type="match status" value="1"/>
</dbReference>
<dbReference type="Gene3D" id="3.30.230.10">
    <property type="match status" value="1"/>
</dbReference>
<dbReference type="Gene3D" id="3.30.70.890">
    <property type="entry name" value="GHMP kinase, C-terminal domain"/>
    <property type="match status" value="1"/>
</dbReference>
<dbReference type="HAMAP" id="MF_00384">
    <property type="entry name" value="Homoser_kinase"/>
    <property type="match status" value="1"/>
</dbReference>
<dbReference type="InterPro" id="IPR013750">
    <property type="entry name" value="GHMP_kinase_C_dom"/>
</dbReference>
<dbReference type="InterPro" id="IPR036554">
    <property type="entry name" value="GHMP_kinase_C_sf"/>
</dbReference>
<dbReference type="InterPro" id="IPR006204">
    <property type="entry name" value="GHMP_kinase_N_dom"/>
</dbReference>
<dbReference type="InterPro" id="IPR006203">
    <property type="entry name" value="GHMP_knse_ATP-bd_CS"/>
</dbReference>
<dbReference type="InterPro" id="IPR000870">
    <property type="entry name" value="Homoserine_kinase"/>
</dbReference>
<dbReference type="InterPro" id="IPR020568">
    <property type="entry name" value="Ribosomal_Su5_D2-typ_SF"/>
</dbReference>
<dbReference type="InterPro" id="IPR014721">
    <property type="entry name" value="Ribsml_uS5_D2-typ_fold_subgr"/>
</dbReference>
<dbReference type="NCBIfam" id="NF002288">
    <property type="entry name" value="PRK01212.1-4"/>
    <property type="match status" value="1"/>
</dbReference>
<dbReference type="NCBIfam" id="TIGR00191">
    <property type="entry name" value="thrB"/>
    <property type="match status" value="1"/>
</dbReference>
<dbReference type="PANTHER" id="PTHR20861:SF1">
    <property type="entry name" value="HOMOSERINE KINASE"/>
    <property type="match status" value="1"/>
</dbReference>
<dbReference type="PANTHER" id="PTHR20861">
    <property type="entry name" value="HOMOSERINE/4-DIPHOSPHOCYTIDYL-2-C-METHYL-D-ERYTHRITOL KINASE"/>
    <property type="match status" value="1"/>
</dbReference>
<dbReference type="Pfam" id="PF08544">
    <property type="entry name" value="GHMP_kinases_C"/>
    <property type="match status" value="1"/>
</dbReference>
<dbReference type="Pfam" id="PF00288">
    <property type="entry name" value="GHMP_kinases_N"/>
    <property type="match status" value="1"/>
</dbReference>
<dbReference type="PIRSF" id="PIRSF000676">
    <property type="entry name" value="Homoser_kin"/>
    <property type="match status" value="1"/>
</dbReference>
<dbReference type="PRINTS" id="PR00958">
    <property type="entry name" value="HOMSERKINASE"/>
</dbReference>
<dbReference type="SUPFAM" id="SSF55060">
    <property type="entry name" value="GHMP Kinase, C-terminal domain"/>
    <property type="match status" value="1"/>
</dbReference>
<dbReference type="SUPFAM" id="SSF54211">
    <property type="entry name" value="Ribosomal protein S5 domain 2-like"/>
    <property type="match status" value="1"/>
</dbReference>
<dbReference type="PROSITE" id="PS00627">
    <property type="entry name" value="GHMP_KINASES_ATP"/>
    <property type="match status" value="1"/>
</dbReference>
<proteinExistence type="inferred from homology"/>
<organism>
    <name type="scientific">Shigella boydii serotype 18 (strain CDC 3083-94 / BS512)</name>
    <dbReference type="NCBI Taxonomy" id="344609"/>
    <lineage>
        <taxon>Bacteria</taxon>
        <taxon>Pseudomonadati</taxon>
        <taxon>Pseudomonadota</taxon>
        <taxon>Gammaproteobacteria</taxon>
        <taxon>Enterobacterales</taxon>
        <taxon>Enterobacteriaceae</taxon>
        <taxon>Shigella</taxon>
    </lineage>
</organism>
<evidence type="ECO:0000255" key="1">
    <source>
        <dbReference type="HAMAP-Rule" id="MF_00384"/>
    </source>
</evidence>
<protein>
    <recommendedName>
        <fullName evidence="1">Homoserine kinase</fullName>
        <shortName evidence="1">HK</shortName>
        <shortName evidence="1">HSK</shortName>
        <ecNumber evidence="1">2.7.1.39</ecNumber>
    </recommendedName>
</protein>
<name>KHSE_SHIB3</name>
<sequence>MVKVYAPASSANMSVGFDVLGAAVTPVDGALLGDVVTVEAAETFSLNNLGRFADKLPSEPRENIVYQCWERFCQELGKQIPVAMTLEKNMPIGSGLGSSACSVVAALMAMNEHCGKPLNDTRLLALMGELEGRISGSIHYDNVAPCFLGGMQLMIEENDIISQQVPGFDEWLWVLAYPGIKVSTAEARAILPAQYRRQDCIAHGRHLAGFIHACYSRQPELAAKLMKDVIAEPYRERLLPGFRQARQAVAEIGAVASGISGSGPTLFALCDKPDTAQRVADWLGKNYLQNQEGFVHICRLDTAGARVLEN</sequence>
<gene>
    <name evidence="1" type="primary">thrB</name>
    <name type="ordered locus">SbBS512_E0003</name>
</gene>
<feature type="chain" id="PRO_1000122444" description="Homoserine kinase">
    <location>
        <begin position="1"/>
        <end position="310"/>
    </location>
</feature>
<feature type="binding site" evidence="1">
    <location>
        <begin position="91"/>
        <end position="101"/>
    </location>
    <ligand>
        <name>ATP</name>
        <dbReference type="ChEBI" id="CHEBI:30616"/>
    </ligand>
</feature>